<feature type="initiator methionine" description="Removed" evidence="1">
    <location>
        <position position="1"/>
    </location>
</feature>
<feature type="chain" id="PRO_0000135300" description="Glutamine--fructose-6-phosphate aminotransferase [isomerizing]">
    <location>
        <begin position="2"/>
        <end position="600"/>
    </location>
</feature>
<feature type="domain" description="Glutamine amidotransferase type-2" evidence="1">
    <location>
        <begin position="2"/>
        <end position="217"/>
    </location>
</feature>
<feature type="domain" description="SIS 1" evidence="1">
    <location>
        <begin position="283"/>
        <end position="422"/>
    </location>
</feature>
<feature type="domain" description="SIS 2" evidence="1">
    <location>
        <begin position="452"/>
        <end position="590"/>
    </location>
</feature>
<feature type="active site" description="Nucleophile; for GATase activity" evidence="1">
    <location>
        <position position="2"/>
    </location>
</feature>
<feature type="active site" description="For Fru-6P isomerization activity" evidence="1">
    <location>
        <position position="595"/>
    </location>
</feature>
<comment type="function">
    <text evidence="1">Catalyzes the first step in hexosamine metabolism, converting fructose-6P into glucosamine-6P using glutamine as a nitrogen source.</text>
</comment>
<comment type="catalytic activity">
    <reaction evidence="1">
        <text>D-fructose 6-phosphate + L-glutamine = D-glucosamine 6-phosphate + L-glutamate</text>
        <dbReference type="Rhea" id="RHEA:13237"/>
        <dbReference type="ChEBI" id="CHEBI:29985"/>
        <dbReference type="ChEBI" id="CHEBI:58359"/>
        <dbReference type="ChEBI" id="CHEBI:58725"/>
        <dbReference type="ChEBI" id="CHEBI:61527"/>
        <dbReference type="EC" id="2.6.1.16"/>
    </reaction>
</comment>
<comment type="subunit">
    <text evidence="1">Homodimer.</text>
</comment>
<comment type="subcellular location">
    <subcellularLocation>
        <location evidence="1">Cytoplasm</location>
    </subcellularLocation>
</comment>
<comment type="induction">
    <text evidence="2">Constitutively expressed, part of the cdaA-cdaR-glmM-glmS operon (PubMed:23192352).</text>
</comment>
<protein>
    <recommendedName>
        <fullName evidence="1">Glutamine--fructose-6-phosphate aminotransferase [isomerizing]</fullName>
        <ecNumber evidence="1">2.6.1.16</ecNumber>
    </recommendedName>
    <alternativeName>
        <fullName evidence="1">D-fructose-6-phosphate amidotransferase</fullName>
    </alternativeName>
    <alternativeName>
        <fullName evidence="1">GFAT</fullName>
    </alternativeName>
    <alternativeName>
        <fullName evidence="1">Glucosamine-6-phosphate synthase</fullName>
    </alternativeName>
    <alternativeName>
        <fullName evidence="1">Hexosephosphate aminotransferase</fullName>
    </alternativeName>
    <alternativeName>
        <fullName evidence="1">L-glutamine--D-fructose-6-phosphate amidotransferase</fullName>
    </alternativeName>
</protein>
<evidence type="ECO:0000255" key="1">
    <source>
        <dbReference type="HAMAP-Rule" id="MF_00164"/>
    </source>
</evidence>
<evidence type="ECO:0000269" key="2">
    <source>
    </source>
</evidence>
<name>GLMS_BACSU</name>
<organism>
    <name type="scientific">Bacillus subtilis (strain 168)</name>
    <dbReference type="NCBI Taxonomy" id="224308"/>
    <lineage>
        <taxon>Bacteria</taxon>
        <taxon>Bacillati</taxon>
        <taxon>Bacillota</taxon>
        <taxon>Bacilli</taxon>
        <taxon>Bacillales</taxon>
        <taxon>Bacillaceae</taxon>
        <taxon>Bacillus</taxon>
    </lineage>
</organism>
<gene>
    <name evidence="1" type="primary">glmS</name>
    <name type="synonym">gcaA</name>
    <name type="synonym">ybxD</name>
    <name type="ordered locus">BSU01780</name>
</gene>
<keyword id="KW-0032">Aminotransferase</keyword>
<keyword id="KW-0963">Cytoplasm</keyword>
<keyword id="KW-0315">Glutamine amidotransferase</keyword>
<keyword id="KW-1185">Reference proteome</keyword>
<keyword id="KW-0677">Repeat</keyword>
<keyword id="KW-0808">Transferase</keyword>
<proteinExistence type="evidence at transcript level"/>
<accession>P0CI73</accession>
<accession>P39754</accession>
<sequence length="600" mass="65338">MCGIVGYIGQLDAKEILLKGLEKLEYRGYDSAGIAVANEQGIHVFKEKGRIADLREVVDANVEAKAGIGHTRWATHGEPSYLNAHPHQSALGRFTLVHNGVIENYVQLKQEYLQDVELKSDTDTEVVVQVIEQFVNGGLETEEAFRKTLTLLKGSYAIALFDNDNRETIFVAKNKSPLLVGLGDTFNVVASDAMAMLQVTNEYVELMDKEMVIVTDDQVVIKNLDGDVITRASYIAELDASDIEKGTYPHYMLKETDEQPVVMRKIIQTYQDENGKLSVPGDIAAAVAEADRIYIIGCGTSYHAGLVGKQYIEMWANVPVEVHVASEFSYNMPLLSKKPLFIFLSQSGETADSRAVLVQVKALGHKALTITNVPGSTLSREADYTLLLHAGPEIAVASTKAYTAQIAVLAVLASVAADKNGINIGFDLVKELGIAANAMEALCDQKDEMEMIAREYLTVSRNAFFIGRGLDYFVCVEGALKLKEISYIQAEGFAGGELKHGTIALIEQGTPVFALATQEHVNLSIRGNVKEVAARGANTCIISLKGLDDADDRFVLPEVNPALAPLVSVVPLQLIAYYAALHRGCDVDKPRNLAKSVTVE</sequence>
<reference key="1">
    <citation type="submission" date="1995-02" db="EMBL/GenBank/DDBJ databases">
        <authorList>
            <person name="Morohoshi F."/>
        </authorList>
    </citation>
    <scope>NUCLEOTIDE SEQUENCE [GENOMIC DNA]</scope>
    <source>
        <strain>168</strain>
    </source>
</reference>
<reference key="2">
    <citation type="submission" date="1997-07" db="EMBL/GenBank/DDBJ databases">
        <title>Sequence analysis of the 70kb region between 17 and 23 degree of the Bacillus subtilis chromosome.</title>
        <authorList>
            <person name="Haga K."/>
            <person name="Liu H."/>
            <person name="Yasumoto K."/>
            <person name="Takahashi H."/>
            <person name="Yoshikawa H."/>
        </authorList>
    </citation>
    <scope>NUCLEOTIDE SEQUENCE [GENOMIC DNA]</scope>
    <source>
        <strain>168</strain>
    </source>
</reference>
<reference key="3">
    <citation type="journal article" date="1997" name="Nature">
        <title>The complete genome sequence of the Gram-positive bacterium Bacillus subtilis.</title>
        <authorList>
            <person name="Kunst F."/>
            <person name="Ogasawara N."/>
            <person name="Moszer I."/>
            <person name="Albertini A.M."/>
            <person name="Alloni G."/>
            <person name="Azevedo V."/>
            <person name="Bertero M.G."/>
            <person name="Bessieres P."/>
            <person name="Bolotin A."/>
            <person name="Borchert S."/>
            <person name="Borriss R."/>
            <person name="Boursier L."/>
            <person name="Brans A."/>
            <person name="Braun M."/>
            <person name="Brignell S.C."/>
            <person name="Bron S."/>
            <person name="Brouillet S."/>
            <person name="Bruschi C.V."/>
            <person name="Caldwell B."/>
            <person name="Capuano V."/>
            <person name="Carter N.M."/>
            <person name="Choi S.-K."/>
            <person name="Codani J.-J."/>
            <person name="Connerton I.F."/>
            <person name="Cummings N.J."/>
            <person name="Daniel R.A."/>
            <person name="Denizot F."/>
            <person name="Devine K.M."/>
            <person name="Duesterhoeft A."/>
            <person name="Ehrlich S.D."/>
            <person name="Emmerson P.T."/>
            <person name="Entian K.-D."/>
            <person name="Errington J."/>
            <person name="Fabret C."/>
            <person name="Ferrari E."/>
            <person name="Foulger D."/>
            <person name="Fritz C."/>
            <person name="Fujita M."/>
            <person name="Fujita Y."/>
            <person name="Fuma S."/>
            <person name="Galizzi A."/>
            <person name="Galleron N."/>
            <person name="Ghim S.-Y."/>
            <person name="Glaser P."/>
            <person name="Goffeau A."/>
            <person name="Golightly E.J."/>
            <person name="Grandi G."/>
            <person name="Guiseppi G."/>
            <person name="Guy B.J."/>
            <person name="Haga K."/>
            <person name="Haiech J."/>
            <person name="Harwood C.R."/>
            <person name="Henaut A."/>
            <person name="Hilbert H."/>
            <person name="Holsappel S."/>
            <person name="Hosono S."/>
            <person name="Hullo M.-F."/>
            <person name="Itaya M."/>
            <person name="Jones L.-M."/>
            <person name="Joris B."/>
            <person name="Karamata D."/>
            <person name="Kasahara Y."/>
            <person name="Klaerr-Blanchard M."/>
            <person name="Klein C."/>
            <person name="Kobayashi Y."/>
            <person name="Koetter P."/>
            <person name="Koningstein G."/>
            <person name="Krogh S."/>
            <person name="Kumano M."/>
            <person name="Kurita K."/>
            <person name="Lapidus A."/>
            <person name="Lardinois S."/>
            <person name="Lauber J."/>
            <person name="Lazarevic V."/>
            <person name="Lee S.-M."/>
            <person name="Levine A."/>
            <person name="Liu H."/>
            <person name="Masuda S."/>
            <person name="Mauel C."/>
            <person name="Medigue C."/>
            <person name="Medina N."/>
            <person name="Mellado R.P."/>
            <person name="Mizuno M."/>
            <person name="Moestl D."/>
            <person name="Nakai S."/>
            <person name="Noback M."/>
            <person name="Noone D."/>
            <person name="O'Reilly M."/>
            <person name="Ogawa K."/>
            <person name="Ogiwara A."/>
            <person name="Oudega B."/>
            <person name="Park S.-H."/>
            <person name="Parro V."/>
            <person name="Pohl T.M."/>
            <person name="Portetelle D."/>
            <person name="Porwollik S."/>
            <person name="Prescott A.M."/>
            <person name="Presecan E."/>
            <person name="Pujic P."/>
            <person name="Purnelle B."/>
            <person name="Rapoport G."/>
            <person name="Rey M."/>
            <person name="Reynolds S."/>
            <person name="Rieger M."/>
            <person name="Rivolta C."/>
            <person name="Rocha E."/>
            <person name="Roche B."/>
            <person name="Rose M."/>
            <person name="Sadaie Y."/>
            <person name="Sato T."/>
            <person name="Scanlan E."/>
            <person name="Schleich S."/>
            <person name="Schroeter R."/>
            <person name="Scoffone F."/>
            <person name="Sekiguchi J."/>
            <person name="Sekowska A."/>
            <person name="Seror S.J."/>
            <person name="Serror P."/>
            <person name="Shin B.-S."/>
            <person name="Soldo B."/>
            <person name="Sorokin A."/>
            <person name="Tacconi E."/>
            <person name="Takagi T."/>
            <person name="Takahashi H."/>
            <person name="Takemaru K."/>
            <person name="Takeuchi M."/>
            <person name="Tamakoshi A."/>
            <person name="Tanaka T."/>
            <person name="Terpstra P."/>
            <person name="Tognoni A."/>
            <person name="Tosato V."/>
            <person name="Uchiyama S."/>
            <person name="Vandenbol M."/>
            <person name="Vannier F."/>
            <person name="Vassarotti A."/>
            <person name="Viari A."/>
            <person name="Wambutt R."/>
            <person name="Wedler E."/>
            <person name="Wedler H."/>
            <person name="Weitzenegger T."/>
            <person name="Winters P."/>
            <person name="Wipat A."/>
            <person name="Yamamoto H."/>
            <person name="Yamane K."/>
            <person name="Yasumoto K."/>
            <person name="Yata K."/>
            <person name="Yoshida K."/>
            <person name="Yoshikawa H.-F."/>
            <person name="Zumstein E."/>
            <person name="Yoshikawa H."/>
            <person name="Danchin A."/>
        </authorList>
    </citation>
    <scope>NUCLEOTIDE SEQUENCE [LARGE SCALE GENOMIC DNA]</scope>
    <source>
        <strain>168</strain>
    </source>
</reference>
<reference key="4">
    <citation type="journal article" date="2013" name="J. Biol. Chem.">
        <title>Cyclic di-AMP homeostasis in Bacillus subtilis: both lack and high level accumulation of the nucleotide are detrimental for cell growth.</title>
        <authorList>
            <person name="Mehne F.M."/>
            <person name="Gunka K."/>
            <person name="Eilers H."/>
            <person name="Herzberg C."/>
            <person name="Kaever V."/>
            <person name="Stuelke J."/>
        </authorList>
    </citation>
    <scope>INDUCTION</scope>
</reference>
<dbReference type="EC" id="2.6.1.16" evidence="1"/>
<dbReference type="EMBL" id="U21932">
    <property type="protein sequence ID" value="AAA64224.1"/>
    <property type="molecule type" value="Genomic_DNA"/>
</dbReference>
<dbReference type="EMBL" id="AB006424">
    <property type="protein sequence ID" value="BAA33071.1"/>
    <property type="molecule type" value="Genomic_DNA"/>
</dbReference>
<dbReference type="EMBL" id="AL009126">
    <property type="protein sequence ID" value="CAB11954.1"/>
    <property type="molecule type" value="Genomic_DNA"/>
</dbReference>
<dbReference type="PIR" id="B69633">
    <property type="entry name" value="B69633"/>
</dbReference>
<dbReference type="RefSeq" id="NP_388059.1">
    <property type="nucleotide sequence ID" value="NC_000964.3"/>
</dbReference>
<dbReference type="RefSeq" id="WP_003234943.1">
    <property type="nucleotide sequence ID" value="NZ_OZ025638.1"/>
</dbReference>
<dbReference type="SMR" id="P0CI73"/>
<dbReference type="FunCoup" id="P0CI73">
    <property type="interactions" value="506"/>
</dbReference>
<dbReference type="IntAct" id="P0CI73">
    <property type="interactions" value="1"/>
</dbReference>
<dbReference type="MINT" id="P0CI73"/>
<dbReference type="STRING" id="224308.BSU01780"/>
<dbReference type="MEROPS" id="C44.A08"/>
<dbReference type="jPOST" id="P0CI73"/>
<dbReference type="PaxDb" id="224308-BSU01780"/>
<dbReference type="EnsemblBacteria" id="CAB11954">
    <property type="protein sequence ID" value="CAB11954"/>
    <property type="gene ID" value="BSU_01780"/>
</dbReference>
<dbReference type="GeneID" id="938736"/>
<dbReference type="KEGG" id="bsu:BSU01780"/>
<dbReference type="PATRIC" id="fig|224308.179.peg.185"/>
<dbReference type="eggNOG" id="COG0449">
    <property type="taxonomic scope" value="Bacteria"/>
</dbReference>
<dbReference type="InParanoid" id="P0CI73"/>
<dbReference type="OrthoDB" id="106547at2"/>
<dbReference type="PhylomeDB" id="P0CI73"/>
<dbReference type="BioCyc" id="BSUB:BSU01780-MONOMER"/>
<dbReference type="BRENDA" id="2.6.1.16">
    <property type="organism ID" value="658"/>
</dbReference>
<dbReference type="Proteomes" id="UP000001570">
    <property type="component" value="Chromosome"/>
</dbReference>
<dbReference type="GO" id="GO:0005829">
    <property type="term" value="C:cytosol"/>
    <property type="evidence" value="ECO:0000318"/>
    <property type="project" value="GO_Central"/>
</dbReference>
<dbReference type="GO" id="GO:0097367">
    <property type="term" value="F:carbohydrate derivative binding"/>
    <property type="evidence" value="ECO:0007669"/>
    <property type="project" value="InterPro"/>
</dbReference>
<dbReference type="GO" id="GO:0004360">
    <property type="term" value="F:glutamine-fructose-6-phosphate transaminase (isomerizing) activity"/>
    <property type="evidence" value="ECO:0000318"/>
    <property type="project" value="GO_Central"/>
</dbReference>
<dbReference type="GO" id="GO:0005975">
    <property type="term" value="P:carbohydrate metabolic process"/>
    <property type="evidence" value="ECO:0007669"/>
    <property type="project" value="UniProtKB-UniRule"/>
</dbReference>
<dbReference type="GO" id="GO:0006002">
    <property type="term" value="P:fructose 6-phosphate metabolic process"/>
    <property type="evidence" value="ECO:0000318"/>
    <property type="project" value="GO_Central"/>
</dbReference>
<dbReference type="GO" id="GO:0006487">
    <property type="term" value="P:protein N-linked glycosylation"/>
    <property type="evidence" value="ECO:0000318"/>
    <property type="project" value="GO_Central"/>
</dbReference>
<dbReference type="GO" id="GO:0006047">
    <property type="term" value="P:UDP-N-acetylglucosamine metabolic process"/>
    <property type="evidence" value="ECO:0000318"/>
    <property type="project" value="GO_Central"/>
</dbReference>
<dbReference type="CDD" id="cd00714">
    <property type="entry name" value="GFAT"/>
    <property type="match status" value="1"/>
</dbReference>
<dbReference type="CDD" id="cd05008">
    <property type="entry name" value="SIS_GlmS_GlmD_1"/>
    <property type="match status" value="1"/>
</dbReference>
<dbReference type="CDD" id="cd05009">
    <property type="entry name" value="SIS_GlmS_GlmD_2"/>
    <property type="match status" value="1"/>
</dbReference>
<dbReference type="FunFam" id="3.40.50.10490:FF:000022">
    <property type="entry name" value="Glutamine--fructose-6-phosphate aminotransferase [isomerizing]"/>
    <property type="match status" value="1"/>
</dbReference>
<dbReference type="FunFam" id="3.60.20.10:FF:000006">
    <property type="entry name" value="Glutamine--fructose-6-phosphate aminotransferase [isomerizing]"/>
    <property type="match status" value="1"/>
</dbReference>
<dbReference type="Gene3D" id="3.40.50.10490">
    <property type="entry name" value="Glucose-6-phosphate isomerase like protein, domain 1"/>
    <property type="match status" value="2"/>
</dbReference>
<dbReference type="Gene3D" id="3.60.20.10">
    <property type="entry name" value="Glutamine Phosphoribosylpyrophosphate, subunit 1, domain 1"/>
    <property type="match status" value="1"/>
</dbReference>
<dbReference type="HAMAP" id="MF_00164">
    <property type="entry name" value="GlmS"/>
    <property type="match status" value="1"/>
</dbReference>
<dbReference type="InterPro" id="IPR017932">
    <property type="entry name" value="GATase_2_dom"/>
</dbReference>
<dbReference type="InterPro" id="IPR005855">
    <property type="entry name" value="GFAT"/>
</dbReference>
<dbReference type="InterPro" id="IPR047084">
    <property type="entry name" value="GFAT_N"/>
</dbReference>
<dbReference type="InterPro" id="IPR035466">
    <property type="entry name" value="GlmS/AgaS_SIS"/>
</dbReference>
<dbReference type="InterPro" id="IPR035490">
    <property type="entry name" value="GlmS/FrlB_SIS"/>
</dbReference>
<dbReference type="InterPro" id="IPR029055">
    <property type="entry name" value="Ntn_hydrolases_N"/>
</dbReference>
<dbReference type="InterPro" id="IPR001347">
    <property type="entry name" value="SIS_dom"/>
</dbReference>
<dbReference type="InterPro" id="IPR046348">
    <property type="entry name" value="SIS_dom_sf"/>
</dbReference>
<dbReference type="NCBIfam" id="TIGR01135">
    <property type="entry name" value="glmS"/>
    <property type="match status" value="1"/>
</dbReference>
<dbReference type="NCBIfam" id="NF001484">
    <property type="entry name" value="PRK00331.1"/>
    <property type="match status" value="1"/>
</dbReference>
<dbReference type="PANTHER" id="PTHR10937">
    <property type="entry name" value="GLUCOSAMINE--FRUCTOSE-6-PHOSPHATE AMINOTRANSFERASE, ISOMERIZING"/>
    <property type="match status" value="1"/>
</dbReference>
<dbReference type="PANTHER" id="PTHR10937:SF0">
    <property type="entry name" value="GLUTAMINE--FRUCTOSE-6-PHOSPHATE TRANSAMINASE (ISOMERIZING)"/>
    <property type="match status" value="1"/>
</dbReference>
<dbReference type="Pfam" id="PF13522">
    <property type="entry name" value="GATase_6"/>
    <property type="match status" value="1"/>
</dbReference>
<dbReference type="Pfam" id="PF01380">
    <property type="entry name" value="SIS"/>
    <property type="match status" value="2"/>
</dbReference>
<dbReference type="SUPFAM" id="SSF56235">
    <property type="entry name" value="N-terminal nucleophile aminohydrolases (Ntn hydrolases)"/>
    <property type="match status" value="1"/>
</dbReference>
<dbReference type="SUPFAM" id="SSF53697">
    <property type="entry name" value="SIS domain"/>
    <property type="match status" value="1"/>
</dbReference>
<dbReference type="PROSITE" id="PS51278">
    <property type="entry name" value="GATASE_TYPE_2"/>
    <property type="match status" value="1"/>
</dbReference>
<dbReference type="PROSITE" id="PS51464">
    <property type="entry name" value="SIS"/>
    <property type="match status" value="2"/>
</dbReference>